<keyword id="KW-1003">Cell membrane</keyword>
<keyword id="KW-0472">Membrane</keyword>
<keyword id="KW-0812">Transmembrane</keyword>
<keyword id="KW-1133">Transmembrane helix</keyword>
<name>Y3798_CLOBM</name>
<feature type="chain" id="PRO_1000198420" description="UPF0316 protein CLK_3798">
    <location>
        <begin position="1"/>
        <end position="170"/>
    </location>
</feature>
<feature type="transmembrane region" description="Helical" evidence="1">
    <location>
        <begin position="1"/>
        <end position="21"/>
    </location>
</feature>
<feature type="transmembrane region" description="Helical" evidence="1">
    <location>
        <begin position="36"/>
        <end position="56"/>
    </location>
</feature>
<proteinExistence type="inferred from homology"/>
<evidence type="ECO:0000255" key="1">
    <source>
        <dbReference type="HAMAP-Rule" id="MF_01515"/>
    </source>
</evidence>
<gene>
    <name type="ordered locus">CLK_3798</name>
</gene>
<organism>
    <name type="scientific">Clostridium botulinum (strain Loch Maree / Type A3)</name>
    <dbReference type="NCBI Taxonomy" id="498214"/>
    <lineage>
        <taxon>Bacteria</taxon>
        <taxon>Bacillati</taxon>
        <taxon>Bacillota</taxon>
        <taxon>Clostridia</taxon>
        <taxon>Eubacteriales</taxon>
        <taxon>Clostridiaceae</taxon>
        <taxon>Clostridium</taxon>
    </lineage>
</organism>
<comment type="subcellular location">
    <subcellularLocation>
        <location evidence="1">Cell membrane</location>
        <topology evidence="1">Multi-pass membrane protein</topology>
    </subcellularLocation>
</comment>
<comment type="similarity">
    <text evidence="1">Belongs to the UPF0316 family.</text>
</comment>
<dbReference type="EMBL" id="CP000962">
    <property type="protein sequence ID" value="ACA54751.1"/>
    <property type="molecule type" value="Genomic_DNA"/>
</dbReference>
<dbReference type="RefSeq" id="WP_003357138.1">
    <property type="nucleotide sequence ID" value="NC_010520.1"/>
</dbReference>
<dbReference type="SMR" id="B1KVR4"/>
<dbReference type="KEGG" id="cbl:CLK_3798"/>
<dbReference type="HOGENOM" id="CLU_106166_0_0_9"/>
<dbReference type="GO" id="GO:0005886">
    <property type="term" value="C:plasma membrane"/>
    <property type="evidence" value="ECO:0007669"/>
    <property type="project" value="UniProtKB-SubCell"/>
</dbReference>
<dbReference type="CDD" id="cd16381">
    <property type="entry name" value="YitT_C_like_1"/>
    <property type="match status" value="1"/>
</dbReference>
<dbReference type="HAMAP" id="MF_01515">
    <property type="entry name" value="UPF0316"/>
    <property type="match status" value="1"/>
</dbReference>
<dbReference type="InterPro" id="IPR019264">
    <property type="entry name" value="DUF2179"/>
</dbReference>
<dbReference type="InterPro" id="IPR044035">
    <property type="entry name" value="DUF5698"/>
</dbReference>
<dbReference type="InterPro" id="IPR022930">
    <property type="entry name" value="UPF0316"/>
</dbReference>
<dbReference type="PANTHER" id="PTHR40060">
    <property type="entry name" value="UPF0316 PROTEIN YEBE"/>
    <property type="match status" value="1"/>
</dbReference>
<dbReference type="PANTHER" id="PTHR40060:SF1">
    <property type="entry name" value="UPF0316 PROTEIN YEBE"/>
    <property type="match status" value="1"/>
</dbReference>
<dbReference type="Pfam" id="PF10035">
    <property type="entry name" value="DUF2179"/>
    <property type="match status" value="1"/>
</dbReference>
<dbReference type="Pfam" id="PF18955">
    <property type="entry name" value="DUF5698"/>
    <property type="match status" value="1"/>
</dbReference>
<accession>B1KVR4</accession>
<sequence length="170" mass="19098">MLSYYAFIFFAKIMEVALMTIRTVLITRGEKLYGSIIGFIEVTIWLYVTSSVLSGIKDDPIRMVVYALGFTCGNYMGCVIEEKLAIGLLTINVITSESDGKRLAEILRDENVGVTMVDAEGKIEQKKMLIIHAKRKRREEIIRTIEGSDINAMISVNDIKTVYGGYGIRK</sequence>
<protein>
    <recommendedName>
        <fullName evidence="1">UPF0316 protein CLK_3798</fullName>
    </recommendedName>
</protein>
<reference key="1">
    <citation type="journal article" date="2007" name="PLoS ONE">
        <title>Analysis of the neurotoxin complex genes in Clostridium botulinum A1-A4 and B1 strains: BoNT/A3, /Ba4 and /B1 clusters are located within plasmids.</title>
        <authorList>
            <person name="Smith T.J."/>
            <person name="Hill K.K."/>
            <person name="Foley B.T."/>
            <person name="Detter J.C."/>
            <person name="Munk A.C."/>
            <person name="Bruce D.C."/>
            <person name="Doggett N.A."/>
            <person name="Smith L.A."/>
            <person name="Marks J.D."/>
            <person name="Xie G."/>
            <person name="Brettin T.S."/>
        </authorList>
    </citation>
    <scope>NUCLEOTIDE SEQUENCE [LARGE SCALE GENOMIC DNA]</scope>
    <source>
        <strain>Loch Maree / Type A3</strain>
    </source>
</reference>